<protein>
    <recommendedName>
        <fullName evidence="1">Holliday junction branch migration complex subunit RuvA</fullName>
    </recommendedName>
</protein>
<gene>
    <name evidence="1" type="primary">ruvA</name>
    <name type="ordered locus">RF_0604</name>
</gene>
<evidence type="ECO:0000255" key="1">
    <source>
        <dbReference type="HAMAP-Rule" id="MF_00031"/>
    </source>
</evidence>
<keyword id="KW-0963">Cytoplasm</keyword>
<keyword id="KW-0227">DNA damage</keyword>
<keyword id="KW-0233">DNA recombination</keyword>
<keyword id="KW-0234">DNA repair</keyword>
<keyword id="KW-0238">DNA-binding</keyword>
<proteinExistence type="inferred from homology"/>
<name>RUVA_RICFE</name>
<comment type="function">
    <text evidence="1">The RuvA-RuvB-RuvC complex processes Holliday junction (HJ) DNA during genetic recombination and DNA repair, while the RuvA-RuvB complex plays an important role in the rescue of blocked DNA replication forks via replication fork reversal (RFR). RuvA specifically binds to HJ cruciform DNA, conferring on it an open structure. The RuvB hexamer acts as an ATP-dependent pump, pulling dsDNA into and through the RuvAB complex. HJ branch migration allows RuvC to scan DNA until it finds its consensus sequence, where it cleaves and resolves the cruciform DNA.</text>
</comment>
<comment type="subunit">
    <text evidence="1">Homotetramer. Forms an RuvA(8)-RuvB(12)-Holliday junction (HJ) complex. HJ DNA is sandwiched between 2 RuvA tetramers; dsDNA enters through RuvA and exits via RuvB. An RuvB hexamer assembles on each DNA strand where it exits the tetramer. Each RuvB hexamer is contacted by two RuvA subunits (via domain III) on 2 adjacent RuvB subunits; this complex drives branch migration. In the full resolvosome a probable DNA-RuvA(4)-RuvB(12)-RuvC(2) complex forms which resolves the HJ.</text>
</comment>
<comment type="subcellular location">
    <subcellularLocation>
        <location evidence="1">Cytoplasm</location>
    </subcellularLocation>
</comment>
<comment type="domain">
    <text evidence="1">Has three domains with a flexible linker between the domains II and III and assumes an 'L' shape. Domain III is highly mobile and contacts RuvB.</text>
</comment>
<comment type="similarity">
    <text evidence="1">Belongs to the RuvA family.</text>
</comment>
<sequence>MIGKLSGKIDSQGDDYIIIDVNGVGYLVYASGKTLGKLAEGEFYKLFIETHVREEHIHLYGFLTLEEKNFFNLLQSVNGIGTRMALSILSSLTPSDIQIAINNEDKNIFKAISGVGAKLAERIVLELKGKVAKISSGSVIIKDSLNIKNITPVASNEVIKALVNLGFSRFEAQNAVQGIIIQNPEISIDELIKTALKNRNAGL</sequence>
<accession>Q4ULW8</accession>
<dbReference type="EMBL" id="CP000053">
    <property type="protein sequence ID" value="AAY61455.1"/>
    <property type="molecule type" value="Genomic_DNA"/>
</dbReference>
<dbReference type="SMR" id="Q4ULW8"/>
<dbReference type="STRING" id="315456.RF_0604"/>
<dbReference type="KEGG" id="rfe:RF_0604"/>
<dbReference type="eggNOG" id="COG0632">
    <property type="taxonomic scope" value="Bacteria"/>
</dbReference>
<dbReference type="HOGENOM" id="CLU_087936_3_0_5"/>
<dbReference type="OrthoDB" id="5293449at2"/>
<dbReference type="Proteomes" id="UP000008548">
    <property type="component" value="Chromosome"/>
</dbReference>
<dbReference type="GO" id="GO:0005737">
    <property type="term" value="C:cytoplasm"/>
    <property type="evidence" value="ECO:0007669"/>
    <property type="project" value="UniProtKB-SubCell"/>
</dbReference>
<dbReference type="GO" id="GO:0009379">
    <property type="term" value="C:Holliday junction helicase complex"/>
    <property type="evidence" value="ECO:0007669"/>
    <property type="project" value="InterPro"/>
</dbReference>
<dbReference type="GO" id="GO:0048476">
    <property type="term" value="C:Holliday junction resolvase complex"/>
    <property type="evidence" value="ECO:0007669"/>
    <property type="project" value="UniProtKB-UniRule"/>
</dbReference>
<dbReference type="GO" id="GO:0005524">
    <property type="term" value="F:ATP binding"/>
    <property type="evidence" value="ECO:0007669"/>
    <property type="project" value="InterPro"/>
</dbReference>
<dbReference type="GO" id="GO:0000400">
    <property type="term" value="F:four-way junction DNA binding"/>
    <property type="evidence" value="ECO:0007669"/>
    <property type="project" value="UniProtKB-UniRule"/>
</dbReference>
<dbReference type="GO" id="GO:0009378">
    <property type="term" value="F:four-way junction helicase activity"/>
    <property type="evidence" value="ECO:0007669"/>
    <property type="project" value="InterPro"/>
</dbReference>
<dbReference type="GO" id="GO:0006310">
    <property type="term" value="P:DNA recombination"/>
    <property type="evidence" value="ECO:0007669"/>
    <property type="project" value="UniProtKB-UniRule"/>
</dbReference>
<dbReference type="GO" id="GO:0006281">
    <property type="term" value="P:DNA repair"/>
    <property type="evidence" value="ECO:0007669"/>
    <property type="project" value="UniProtKB-UniRule"/>
</dbReference>
<dbReference type="CDD" id="cd14332">
    <property type="entry name" value="UBA_RuvA_C"/>
    <property type="match status" value="1"/>
</dbReference>
<dbReference type="Gene3D" id="1.10.150.20">
    <property type="entry name" value="5' to 3' exonuclease, C-terminal subdomain"/>
    <property type="match status" value="1"/>
</dbReference>
<dbReference type="Gene3D" id="1.10.8.10">
    <property type="entry name" value="DNA helicase RuvA subunit, C-terminal domain"/>
    <property type="match status" value="1"/>
</dbReference>
<dbReference type="Gene3D" id="2.40.50.140">
    <property type="entry name" value="Nucleic acid-binding proteins"/>
    <property type="match status" value="1"/>
</dbReference>
<dbReference type="HAMAP" id="MF_00031">
    <property type="entry name" value="DNA_HJ_migration_RuvA"/>
    <property type="match status" value="1"/>
</dbReference>
<dbReference type="InterPro" id="IPR013849">
    <property type="entry name" value="DNA_helicase_Holl-junc_RuvA_I"/>
</dbReference>
<dbReference type="InterPro" id="IPR003583">
    <property type="entry name" value="Hlx-hairpin-Hlx_DNA-bd_motif"/>
</dbReference>
<dbReference type="InterPro" id="IPR012340">
    <property type="entry name" value="NA-bd_OB-fold"/>
</dbReference>
<dbReference type="InterPro" id="IPR000085">
    <property type="entry name" value="RuvA"/>
</dbReference>
<dbReference type="InterPro" id="IPR010994">
    <property type="entry name" value="RuvA_2-like"/>
</dbReference>
<dbReference type="InterPro" id="IPR011114">
    <property type="entry name" value="RuvA_C"/>
</dbReference>
<dbReference type="InterPro" id="IPR036267">
    <property type="entry name" value="RuvA_C_sf"/>
</dbReference>
<dbReference type="NCBIfam" id="TIGR00084">
    <property type="entry name" value="ruvA"/>
    <property type="match status" value="1"/>
</dbReference>
<dbReference type="Pfam" id="PF14520">
    <property type="entry name" value="HHH_5"/>
    <property type="match status" value="1"/>
</dbReference>
<dbReference type="Pfam" id="PF07499">
    <property type="entry name" value="RuvA_C"/>
    <property type="match status" value="1"/>
</dbReference>
<dbReference type="Pfam" id="PF01330">
    <property type="entry name" value="RuvA_N"/>
    <property type="match status" value="1"/>
</dbReference>
<dbReference type="SMART" id="SM00278">
    <property type="entry name" value="HhH1"/>
    <property type="match status" value="2"/>
</dbReference>
<dbReference type="SUPFAM" id="SSF46929">
    <property type="entry name" value="DNA helicase RuvA subunit, C-terminal domain"/>
    <property type="match status" value="1"/>
</dbReference>
<dbReference type="SUPFAM" id="SSF50249">
    <property type="entry name" value="Nucleic acid-binding proteins"/>
    <property type="match status" value="1"/>
</dbReference>
<dbReference type="SUPFAM" id="SSF47781">
    <property type="entry name" value="RuvA domain 2-like"/>
    <property type="match status" value="1"/>
</dbReference>
<feature type="chain" id="PRO_0000224902" description="Holliday junction branch migration complex subunit RuvA">
    <location>
        <begin position="1"/>
        <end position="203"/>
    </location>
</feature>
<feature type="region of interest" description="Domain I" evidence="1">
    <location>
        <begin position="1"/>
        <end position="63"/>
    </location>
</feature>
<feature type="region of interest" description="Domain II" evidence="1">
    <location>
        <begin position="64"/>
        <end position="142"/>
    </location>
</feature>
<feature type="region of interest" description="Flexible linker" evidence="1">
    <location>
        <begin position="143"/>
        <end position="149"/>
    </location>
</feature>
<feature type="region of interest" description="Domain III" evidence="1">
    <location>
        <begin position="150"/>
        <end position="203"/>
    </location>
</feature>
<reference key="1">
    <citation type="journal article" date="2005" name="PLoS Biol.">
        <title>The genome sequence of Rickettsia felis identifies the first putative conjugative plasmid in an obligate intracellular parasite.</title>
        <authorList>
            <person name="Ogata H."/>
            <person name="Renesto P."/>
            <person name="Audic S."/>
            <person name="Robert C."/>
            <person name="Blanc G."/>
            <person name="Fournier P.-E."/>
            <person name="Parinello H."/>
            <person name="Claverie J.-M."/>
            <person name="Raoult D."/>
        </authorList>
    </citation>
    <scope>NUCLEOTIDE SEQUENCE [LARGE SCALE GENOMIC DNA]</scope>
    <source>
        <strain>ATCC VR-1525 / URRWXCal2</strain>
    </source>
</reference>
<organism>
    <name type="scientific">Rickettsia felis (strain ATCC VR-1525 / URRWXCal2)</name>
    <name type="common">Rickettsia azadi</name>
    <dbReference type="NCBI Taxonomy" id="315456"/>
    <lineage>
        <taxon>Bacteria</taxon>
        <taxon>Pseudomonadati</taxon>
        <taxon>Pseudomonadota</taxon>
        <taxon>Alphaproteobacteria</taxon>
        <taxon>Rickettsiales</taxon>
        <taxon>Rickettsiaceae</taxon>
        <taxon>Rickettsieae</taxon>
        <taxon>Rickettsia</taxon>
        <taxon>spotted fever group</taxon>
    </lineage>
</organism>